<evidence type="ECO:0000250" key="1"/>
<evidence type="ECO:0000255" key="2">
    <source>
        <dbReference type="PROSITE-ProRule" id="PRU01182"/>
    </source>
</evidence>
<evidence type="ECO:0000256" key="3">
    <source>
        <dbReference type="SAM" id="MobiDB-lite"/>
    </source>
</evidence>
<evidence type="ECO:0000305" key="4"/>
<dbReference type="EMBL" id="AAEY01000015">
    <property type="protein sequence ID" value="EAL21785.1"/>
    <property type="molecule type" value="Genomic_DNA"/>
</dbReference>
<dbReference type="RefSeq" id="XP_776432.1">
    <property type="nucleotide sequence ID" value="XM_771339.1"/>
</dbReference>
<dbReference type="SMR" id="P0CP31"/>
<dbReference type="GeneID" id="4935152"/>
<dbReference type="KEGG" id="cnb:CNBC4870"/>
<dbReference type="VEuPathDB" id="FungiDB:CNBC4870"/>
<dbReference type="HOGENOM" id="CLU_017172_1_0_1"/>
<dbReference type="OrthoDB" id="1802at5206"/>
<dbReference type="GO" id="GO:0005789">
    <property type="term" value="C:endoplasmic reticulum membrane"/>
    <property type="evidence" value="ECO:0007669"/>
    <property type="project" value="UniProtKB-SubCell"/>
</dbReference>
<dbReference type="GO" id="GO:0031965">
    <property type="term" value="C:nuclear membrane"/>
    <property type="evidence" value="ECO:0007669"/>
    <property type="project" value="UniProtKB-SubCell"/>
</dbReference>
<dbReference type="GO" id="GO:0048471">
    <property type="term" value="C:perinuclear region of cytoplasm"/>
    <property type="evidence" value="ECO:0007669"/>
    <property type="project" value="UniProtKB-SubCell"/>
</dbReference>
<dbReference type="GO" id="GO:0043130">
    <property type="term" value="F:ubiquitin binding"/>
    <property type="evidence" value="ECO:0007669"/>
    <property type="project" value="TreeGrafter"/>
</dbReference>
<dbReference type="GO" id="GO:0031625">
    <property type="term" value="F:ubiquitin protein ligase binding"/>
    <property type="evidence" value="ECO:0007669"/>
    <property type="project" value="TreeGrafter"/>
</dbReference>
<dbReference type="GO" id="GO:0051028">
    <property type="term" value="P:mRNA transport"/>
    <property type="evidence" value="ECO:0007669"/>
    <property type="project" value="UniProtKB-KW"/>
</dbReference>
<dbReference type="GO" id="GO:0015031">
    <property type="term" value="P:protein transport"/>
    <property type="evidence" value="ECO:0007669"/>
    <property type="project" value="UniProtKB-KW"/>
</dbReference>
<dbReference type="GO" id="GO:0006511">
    <property type="term" value="P:ubiquitin-dependent protein catabolic process"/>
    <property type="evidence" value="ECO:0007669"/>
    <property type="project" value="InterPro"/>
</dbReference>
<dbReference type="CDD" id="cd08061">
    <property type="entry name" value="MPN_NPL4"/>
    <property type="match status" value="1"/>
</dbReference>
<dbReference type="FunFam" id="3.10.20.90:FF:000243">
    <property type="entry name" value="Nuclear protein localization protein 4"/>
    <property type="match status" value="1"/>
</dbReference>
<dbReference type="Gene3D" id="3.10.20.90">
    <property type="entry name" value="Phosphatidylinositol 3-kinase Catalytic Subunit, Chain A, domain 1"/>
    <property type="match status" value="1"/>
</dbReference>
<dbReference type="InterPro" id="IPR037518">
    <property type="entry name" value="MPN"/>
</dbReference>
<dbReference type="InterPro" id="IPR016563">
    <property type="entry name" value="Npl4"/>
</dbReference>
<dbReference type="InterPro" id="IPR007717">
    <property type="entry name" value="NPL4_C"/>
</dbReference>
<dbReference type="InterPro" id="IPR007716">
    <property type="entry name" value="NPL4_Zn-bd_put"/>
</dbReference>
<dbReference type="PANTHER" id="PTHR12710">
    <property type="entry name" value="NUCLEAR PROTEIN LOCALIZATION 4"/>
    <property type="match status" value="1"/>
</dbReference>
<dbReference type="PANTHER" id="PTHR12710:SF0">
    <property type="entry name" value="NUCLEAR PROTEIN LOCALIZATION PROTEIN 4 HOMOLOG"/>
    <property type="match status" value="1"/>
</dbReference>
<dbReference type="Pfam" id="PF05021">
    <property type="entry name" value="NPL4"/>
    <property type="match status" value="1"/>
</dbReference>
<dbReference type="Pfam" id="PF05020">
    <property type="entry name" value="zf-NPL4"/>
    <property type="match status" value="1"/>
</dbReference>
<dbReference type="PIRSF" id="PIRSF010052">
    <property type="entry name" value="Polyub_prc_Npl4"/>
    <property type="match status" value="1"/>
</dbReference>
<dbReference type="PROSITE" id="PS50249">
    <property type="entry name" value="MPN"/>
    <property type="match status" value="1"/>
</dbReference>
<proteinExistence type="inferred from homology"/>
<protein>
    <recommendedName>
        <fullName>Nuclear protein localization protein 4</fullName>
    </recommendedName>
</protein>
<feature type="chain" id="PRO_0000410173" description="Nuclear protein localization protein 4">
    <location>
        <begin position="1"/>
        <end position="693"/>
    </location>
</feature>
<feature type="domain" description="MPN" evidence="2">
    <location>
        <begin position="259"/>
        <end position="399"/>
    </location>
</feature>
<feature type="region of interest" description="Disordered" evidence="3">
    <location>
        <begin position="85"/>
        <end position="132"/>
    </location>
</feature>
<feature type="region of interest" description="Disordered" evidence="3">
    <location>
        <begin position="615"/>
        <end position="662"/>
    </location>
</feature>
<feature type="compositionally biased region" description="Polar residues" evidence="3">
    <location>
        <begin position="615"/>
        <end position="631"/>
    </location>
</feature>
<feature type="compositionally biased region" description="Low complexity" evidence="3">
    <location>
        <begin position="644"/>
        <end position="655"/>
    </location>
</feature>
<sequence length="693" mass="75197">MLLRIRSPAGTARLTVQPETTGEDFAEAILNTIPAADPQPDPATLALSNQPGAAGESVPFHALSGRTVGDMGFSHGDLLFLSYKPRAADPDSHPAMQATAPHPQPAQPDPSHPKTHTDPPMPNTIPLRDLSSVQEPEIDQYWEKQTGKIERKRDPAFCRHGDKAMCDYCMPLEPYDPKFQSEHQIKHLSYHAYLRKLLSSRPPTASSATDLPPLSPTSLSVITPCPTGAHPSFPDGICSTCQPSAVTLQSQPFRMVDHIEFASPSIIEGLLSAWRRTGTQRIAFLIGREDKYEKVPMGIKVIVEAVWEPKQEGELDGLTVETPWSDESRVQEIAKWCDKGLSVVGMIYTDLTPSPDDITKTLYKRHAQSYTASSLEMLLSAAYQLSHPLSTRMSPTGHYSSRFVTCCLTGDKDGGVDILAWQASEHAEAMVKAGIVEASVDPAVVRVRKPGEGEYVPEVFYSYKNEYGLQVKMPAKPTFPVEYLYVNITHGFPLAPSPLFLSNAFPTENRPGLHDQSMQVVITQLAAILKTSDAEIGDAGTWPGRIKKDVEKWLSDWHLVTFLCMQGLFSLKEQQILCRAATAHAHPNDTYALEELFASGGWQTLLTIVDSEASANARSNPPPTSSFNNLGIDSPAFAGPSTESSAPPSGPDSVGAGAGAGPVGGRERVCPHCTFVNEHGGSDCEICGLPLDG</sequence>
<name>NPL4_CRYNB</name>
<organism>
    <name type="scientific">Cryptococcus neoformans var. neoformans serotype D (strain B-3501A)</name>
    <name type="common">Filobasidiella neoformans</name>
    <dbReference type="NCBI Taxonomy" id="283643"/>
    <lineage>
        <taxon>Eukaryota</taxon>
        <taxon>Fungi</taxon>
        <taxon>Dikarya</taxon>
        <taxon>Basidiomycota</taxon>
        <taxon>Agaricomycotina</taxon>
        <taxon>Tremellomycetes</taxon>
        <taxon>Tremellales</taxon>
        <taxon>Cryptococcaceae</taxon>
        <taxon>Cryptococcus</taxon>
        <taxon>Cryptococcus neoformans species complex</taxon>
    </lineage>
</organism>
<comment type="function">
    <text evidence="1">Involved in the import of nuclear-targeted proteins into the nucleus and the export of poly(A) RNA out of the nucleus. Has a role in the endoplasmic reticulum-associated degradation (ERAD) pathway (By similarity).</text>
</comment>
<comment type="subcellular location">
    <subcellularLocation>
        <location evidence="1">Cytoplasm</location>
        <location evidence="1">Perinuclear region</location>
    </subcellularLocation>
    <subcellularLocation>
        <location evidence="1">Endoplasmic reticulum membrane</location>
        <topology evidence="1">Peripheral membrane protein</topology>
        <orientation evidence="1">Cytoplasmic side</orientation>
    </subcellularLocation>
    <subcellularLocation>
        <location evidence="1">Nucleus membrane</location>
        <topology evidence="1">Peripheral membrane protein</topology>
        <orientation evidence="1">Cytoplasmic side</orientation>
    </subcellularLocation>
    <text evidence="1">Localizes mainly at the nuclear periphery and the endoplasmic reticulum membrane.</text>
</comment>
<comment type="similarity">
    <text evidence="4">Belongs to the NPL4 family.</text>
</comment>
<reference key="1">
    <citation type="journal article" date="2005" name="Science">
        <title>The genome of the basidiomycetous yeast and human pathogen Cryptococcus neoformans.</title>
        <authorList>
            <person name="Loftus B.J."/>
            <person name="Fung E."/>
            <person name="Roncaglia P."/>
            <person name="Rowley D."/>
            <person name="Amedeo P."/>
            <person name="Bruno D."/>
            <person name="Vamathevan J."/>
            <person name="Miranda M."/>
            <person name="Anderson I.J."/>
            <person name="Fraser J.A."/>
            <person name="Allen J.E."/>
            <person name="Bosdet I.E."/>
            <person name="Brent M.R."/>
            <person name="Chiu R."/>
            <person name="Doering T.L."/>
            <person name="Donlin M.J."/>
            <person name="D'Souza C.A."/>
            <person name="Fox D.S."/>
            <person name="Grinberg V."/>
            <person name="Fu J."/>
            <person name="Fukushima M."/>
            <person name="Haas B.J."/>
            <person name="Huang J.C."/>
            <person name="Janbon G."/>
            <person name="Jones S.J.M."/>
            <person name="Koo H.L."/>
            <person name="Krzywinski M.I."/>
            <person name="Kwon-Chung K.J."/>
            <person name="Lengeler K.B."/>
            <person name="Maiti R."/>
            <person name="Marra M.A."/>
            <person name="Marra R.E."/>
            <person name="Mathewson C.A."/>
            <person name="Mitchell T.G."/>
            <person name="Pertea M."/>
            <person name="Riggs F.R."/>
            <person name="Salzberg S.L."/>
            <person name="Schein J.E."/>
            <person name="Shvartsbeyn A."/>
            <person name="Shin H."/>
            <person name="Shumway M."/>
            <person name="Specht C.A."/>
            <person name="Suh B.B."/>
            <person name="Tenney A."/>
            <person name="Utterback T.R."/>
            <person name="Wickes B.L."/>
            <person name="Wortman J.R."/>
            <person name="Wye N.H."/>
            <person name="Kronstad J.W."/>
            <person name="Lodge J.K."/>
            <person name="Heitman J."/>
            <person name="Davis R.W."/>
            <person name="Fraser C.M."/>
            <person name="Hyman R.W."/>
        </authorList>
    </citation>
    <scope>NUCLEOTIDE SEQUENCE [LARGE SCALE GENOMIC DNA]</scope>
    <source>
        <strain>B-3501A</strain>
    </source>
</reference>
<accession>P0CP31</accession>
<accession>Q55VJ9</accession>
<accession>Q5KKN9</accession>
<gene>
    <name type="primary">NPL4</name>
    <name type="ordered locus">CNBC4870</name>
</gene>
<keyword id="KW-0963">Cytoplasm</keyword>
<keyword id="KW-0256">Endoplasmic reticulum</keyword>
<keyword id="KW-0472">Membrane</keyword>
<keyword id="KW-0509">mRNA transport</keyword>
<keyword id="KW-0539">Nucleus</keyword>
<keyword id="KW-0653">Protein transport</keyword>
<keyword id="KW-0811">Translocation</keyword>
<keyword id="KW-0813">Transport</keyword>